<feature type="chain" id="PRO_0000086735" description="Serine/threonine-protein kinase TAO2">
    <location>
        <begin position="1"/>
        <end position="1235"/>
    </location>
</feature>
<feature type="transmembrane region" description="Helical" evidence="4">
    <location>
        <begin position="967"/>
        <end position="987"/>
    </location>
</feature>
<feature type="transmembrane region" description="Helical" evidence="4">
    <location>
        <begin position="989"/>
        <end position="1009"/>
    </location>
</feature>
<feature type="transmembrane region" description="Helical" evidence="4">
    <location>
        <begin position="1014"/>
        <end position="1034"/>
    </location>
</feature>
<feature type="transmembrane region" description="Helical" evidence="4">
    <location>
        <begin position="1040"/>
        <end position="1060"/>
    </location>
</feature>
<feature type="transmembrane region" description="Helical" evidence="4">
    <location>
        <begin position="1170"/>
        <end position="1190"/>
    </location>
</feature>
<feature type="domain" description="Protein kinase" evidence="5">
    <location>
        <begin position="28"/>
        <end position="281"/>
    </location>
</feature>
<feature type="region of interest" description="Disordered" evidence="7">
    <location>
        <begin position="318"/>
        <end position="457"/>
    </location>
</feature>
<feature type="region of interest" description="Disordered" evidence="7">
    <location>
        <begin position="892"/>
        <end position="941"/>
    </location>
</feature>
<feature type="region of interest" description="Disordered" evidence="7">
    <location>
        <begin position="1210"/>
        <end position="1235"/>
    </location>
</feature>
<feature type="coiled-coil region" evidence="4">
    <location>
        <begin position="488"/>
        <end position="523"/>
    </location>
</feature>
<feature type="coiled-coil region" evidence="4">
    <location>
        <begin position="576"/>
        <end position="603"/>
    </location>
</feature>
<feature type="coiled-coil region" evidence="4">
    <location>
        <begin position="683"/>
        <end position="715"/>
    </location>
</feature>
<feature type="compositionally biased region" description="Low complexity" evidence="7">
    <location>
        <begin position="350"/>
        <end position="374"/>
    </location>
</feature>
<feature type="compositionally biased region" description="Acidic residues" evidence="7">
    <location>
        <begin position="375"/>
        <end position="395"/>
    </location>
</feature>
<feature type="compositionally biased region" description="Basic and acidic residues" evidence="7">
    <location>
        <begin position="396"/>
        <end position="411"/>
    </location>
</feature>
<feature type="compositionally biased region" description="Acidic residues" evidence="7">
    <location>
        <begin position="899"/>
        <end position="909"/>
    </location>
</feature>
<feature type="compositionally biased region" description="Pro residues" evidence="7">
    <location>
        <begin position="926"/>
        <end position="935"/>
    </location>
</feature>
<feature type="active site" description="Proton acceptor" evidence="5 6">
    <location>
        <position position="151"/>
    </location>
</feature>
<feature type="binding site" evidence="5">
    <location>
        <begin position="34"/>
        <end position="42"/>
    </location>
    <ligand>
        <name>ATP</name>
        <dbReference type="ChEBI" id="CHEBI:30616"/>
    </ligand>
</feature>
<feature type="binding site" evidence="5">
    <location>
        <position position="57"/>
    </location>
    <ligand>
        <name>ATP</name>
        <dbReference type="ChEBI" id="CHEBI:30616"/>
    </ligand>
</feature>
<feature type="binding site" evidence="10 16">
    <location>
        <begin position="106"/>
        <end position="108"/>
    </location>
    <ligand>
        <name>staurosporine</name>
        <dbReference type="ChEBI" id="CHEBI:57491"/>
        <note>inhibitor</note>
    </ligand>
</feature>
<feature type="binding site" evidence="10 16">
    <location>
        <position position="155"/>
    </location>
    <ligand>
        <name>staurosporine</name>
        <dbReference type="ChEBI" id="CHEBI:57491"/>
        <note>inhibitor</note>
    </ligand>
</feature>
<feature type="modified residue" description="Phosphoserine" evidence="3">
    <location>
        <position position="9"/>
    </location>
</feature>
<feature type="modified residue" description="Phosphoserine" evidence="9">
    <location>
        <position position="181"/>
    </location>
</feature>
<feature type="modified residue" description="Phosphoserine" evidence="3">
    <location>
        <position position="416"/>
    </location>
</feature>
<feature type="modified residue" description="Phosphoserine" evidence="2">
    <location>
        <position position="658"/>
    </location>
</feature>
<feature type="modified residue" description="Phosphoserine" evidence="3">
    <location>
        <position position="777"/>
    </location>
</feature>
<feature type="modified residue" description="Phosphoserine" evidence="3">
    <location>
        <position position="825"/>
    </location>
</feature>
<feature type="modified residue" description="Phosphoserine" evidence="3">
    <location>
        <position position="827"/>
    </location>
</feature>
<feature type="splice variant" id="VSP_040545" description="In isoform 2." evidence="12">
    <original>E</original>
    <variation>ELTPCSQ</variation>
    <location>
        <position position="333"/>
    </location>
</feature>
<feature type="splice variant" id="VSP_040546" description="In isoform 2." evidence="12">
    <original>VRAGQLPMGLPATGALGPLSTGTLSEEQPCSSGQEAILGQRMLGEEEEAVPERMILGKEGTTLEPEEQRILGEEMGTFSSSPQKHRSLVNEEDWDISKEMKESRVPSLASQERNIIGQEEAGAWNLWEKEHGNLVDMEFKLGWVQGPVLTPVPEEEEEEEEEGGAPIGTPRDPGDGCPSPDIPPEPPPSHLRQYPASQLPGFLSHGLLTGLSFAVGSSSGLLPLLLLLLLPLLAAQGGGGLQAALLALEVGLVGLGASYLFLCTALHLPPSLFLLLAQGTALGAVLSLSWRRGLMGVPLGLGAA</original>
    <variation>SKELQIKKQFQETCKIQTRQYKALRAHLLETTPKAQHKSLVKRLKEEQTRKLAILAEQYDQSISEMLSSQALRLDETQEAEFQALRQRSNRNWSSLMLTRARSKIRTESQHERELRELEQRVALRRALLEQRVEEELLALQTGRSERIRSLLERQAREIEAFDAESMRLGFSSMALGGIPAEAAAQGYPAPPPAPAWPSRPVPRSGAHWSHGPPPPGMPPPAWRXPALLAPPGPPNWLGPPTQSGTPSGGALLLLRNSPQPLKRAASGGSSGENVGPPAAVPGPLSRSTSVASHILNGSSHFYS</variation>
    <location>
        <begin position="747"/>
        <end position="1050"/>
    </location>
</feature>
<feature type="splice variant" id="VSP_040547" description="In isoform 2." evidence="12">
    <location>
        <begin position="1051"/>
        <end position="1235"/>
    </location>
</feature>
<feature type="mutagenesis site" description="Loss of activity. Loss of MAPK14 phosphorylation and of PCDH8 internalization." evidence="11">
    <original>K</original>
    <variation>A</variation>
    <location>
        <position position="57"/>
    </location>
</feature>
<feature type="sequence conflict" description="In Ref. 2; BAF64457." evidence="13" ref="2">
    <original>P</original>
    <variation>L</variation>
    <location>
        <position position="434"/>
    </location>
</feature>
<feature type="helix" evidence="17">
    <location>
        <begin position="13"/>
        <end position="18"/>
    </location>
</feature>
<feature type="helix" evidence="17">
    <location>
        <begin position="24"/>
        <end position="27"/>
    </location>
</feature>
<feature type="strand" evidence="17">
    <location>
        <begin position="28"/>
        <end position="36"/>
    </location>
</feature>
<feature type="strand" evidence="17">
    <location>
        <begin position="38"/>
        <end position="47"/>
    </location>
</feature>
<feature type="turn" evidence="17">
    <location>
        <begin position="48"/>
        <end position="51"/>
    </location>
</feature>
<feature type="strand" evidence="17">
    <location>
        <begin position="52"/>
        <end position="61"/>
    </location>
</feature>
<feature type="helix" evidence="17">
    <location>
        <begin position="66"/>
        <end position="82"/>
    </location>
</feature>
<feature type="strand" evidence="17">
    <location>
        <begin position="91"/>
        <end position="97"/>
    </location>
</feature>
<feature type="strand" evidence="17">
    <location>
        <begin position="100"/>
        <end position="106"/>
    </location>
</feature>
<feature type="strand" evidence="17">
    <location>
        <begin position="109"/>
        <end position="111"/>
    </location>
</feature>
<feature type="helix" evidence="17">
    <location>
        <begin position="112"/>
        <end position="119"/>
    </location>
</feature>
<feature type="helix" evidence="17">
    <location>
        <begin position="125"/>
        <end position="144"/>
    </location>
</feature>
<feature type="helix" evidence="17">
    <location>
        <begin position="154"/>
        <end position="156"/>
    </location>
</feature>
<feature type="strand" evidence="17">
    <location>
        <begin position="157"/>
        <end position="160"/>
    </location>
</feature>
<feature type="turn" evidence="17">
    <location>
        <begin position="161"/>
        <end position="163"/>
    </location>
</feature>
<feature type="strand" evidence="17">
    <location>
        <begin position="164"/>
        <end position="167"/>
    </location>
</feature>
<feature type="strand" evidence="17">
    <location>
        <begin position="174"/>
        <end position="179"/>
    </location>
</feature>
<feature type="helix" evidence="17">
    <location>
        <begin position="186"/>
        <end position="188"/>
    </location>
</feature>
<feature type="helix" evidence="17">
    <location>
        <begin position="191"/>
        <end position="195"/>
    </location>
</feature>
<feature type="turn" evidence="18">
    <location>
        <begin position="196"/>
        <end position="199"/>
    </location>
</feature>
<feature type="helix" evidence="17">
    <location>
        <begin position="205"/>
        <end position="220"/>
    </location>
</feature>
<feature type="turn" evidence="17">
    <location>
        <begin position="224"/>
        <end position="227"/>
    </location>
</feature>
<feature type="helix" evidence="17">
    <location>
        <begin position="230"/>
        <end position="239"/>
    </location>
</feature>
<feature type="helix" evidence="17">
    <location>
        <begin position="252"/>
        <end position="261"/>
    </location>
</feature>
<feature type="helix" evidence="17">
    <location>
        <begin position="266"/>
        <end position="268"/>
    </location>
</feature>
<feature type="helix" evidence="17">
    <location>
        <begin position="272"/>
        <end position="275"/>
    </location>
</feature>
<feature type="helix" evidence="17">
    <location>
        <begin position="279"/>
        <end position="282"/>
    </location>
</feature>
<feature type="helix" evidence="17">
    <location>
        <begin position="289"/>
        <end position="303"/>
    </location>
</feature>
<feature type="strand" evidence="18">
    <location>
        <begin position="304"/>
        <end position="306"/>
    </location>
</feature>
<feature type="helix" evidence="17">
    <location>
        <begin position="307"/>
        <end position="309"/>
    </location>
</feature>
<feature type="helix" evidence="17">
    <location>
        <begin position="311"/>
        <end position="319"/>
    </location>
</feature>
<feature type="modified residue" description="Phosphoserine" evidence="11">
    <location sequence="Q9JLS3-2">
        <position position="1038"/>
    </location>
</feature>
<proteinExistence type="evidence at protein level"/>
<organism>
    <name type="scientific">Rattus norvegicus</name>
    <name type="common">Rat</name>
    <dbReference type="NCBI Taxonomy" id="10116"/>
    <lineage>
        <taxon>Eukaryota</taxon>
        <taxon>Metazoa</taxon>
        <taxon>Chordata</taxon>
        <taxon>Craniata</taxon>
        <taxon>Vertebrata</taxon>
        <taxon>Euteleostomi</taxon>
        <taxon>Mammalia</taxon>
        <taxon>Eutheria</taxon>
        <taxon>Euarchontoglires</taxon>
        <taxon>Glires</taxon>
        <taxon>Rodentia</taxon>
        <taxon>Myomorpha</taxon>
        <taxon>Muroidea</taxon>
        <taxon>Muridae</taxon>
        <taxon>Murinae</taxon>
        <taxon>Rattus</taxon>
    </lineage>
</organism>
<keyword id="KW-0002">3D-structure</keyword>
<keyword id="KW-0025">Alternative splicing</keyword>
<keyword id="KW-0067">ATP-binding</keyword>
<keyword id="KW-0966">Cell projection</keyword>
<keyword id="KW-0175">Coiled coil</keyword>
<keyword id="KW-0963">Cytoplasm</keyword>
<keyword id="KW-0968">Cytoplasmic vesicle</keyword>
<keyword id="KW-0206">Cytoskeleton</keyword>
<keyword id="KW-0418">Kinase</keyword>
<keyword id="KW-0460">Magnesium</keyword>
<keyword id="KW-0472">Membrane</keyword>
<keyword id="KW-0547">Nucleotide-binding</keyword>
<keyword id="KW-0597">Phosphoprotein</keyword>
<keyword id="KW-1185">Reference proteome</keyword>
<keyword id="KW-0723">Serine/threonine-protein kinase</keyword>
<keyword id="KW-0808">Transferase</keyword>
<keyword id="KW-0812">Transmembrane</keyword>
<keyword id="KW-1133">Transmembrane helix</keyword>
<dbReference type="EC" id="2.7.11.1"/>
<dbReference type="EMBL" id="AF140556">
    <property type="protein sequence ID" value="AAD39480.2"/>
    <property type="molecule type" value="mRNA"/>
</dbReference>
<dbReference type="EMBL" id="AB290408">
    <property type="protein sequence ID" value="BAF64457.1"/>
    <property type="molecule type" value="mRNA"/>
</dbReference>
<dbReference type="RefSeq" id="NP_073193.1">
    <molecule id="Q9JLS3-1"/>
    <property type="nucleotide sequence ID" value="NM_022702.1"/>
</dbReference>
<dbReference type="PDB" id="1U5Q">
    <property type="method" value="X-ray"/>
    <property type="resolution" value="2.10 A"/>
    <property type="chains" value="A/B=1-320"/>
</dbReference>
<dbReference type="PDB" id="1U5R">
    <property type="method" value="X-ray"/>
    <property type="resolution" value="2.10 A"/>
    <property type="chains" value="A/B=1-320"/>
</dbReference>
<dbReference type="PDB" id="2GCD">
    <property type="method" value="X-ray"/>
    <property type="resolution" value="2.55 A"/>
    <property type="chains" value="A/B=12-320"/>
</dbReference>
<dbReference type="PDBsum" id="1U5Q"/>
<dbReference type="PDBsum" id="1U5R"/>
<dbReference type="PDBsum" id="2GCD"/>
<dbReference type="SMR" id="Q9JLS3"/>
<dbReference type="FunCoup" id="Q9JLS3">
    <property type="interactions" value="3857"/>
</dbReference>
<dbReference type="IntAct" id="Q9JLS3">
    <property type="interactions" value="1"/>
</dbReference>
<dbReference type="STRING" id="10116.ENSRNOP00000071896"/>
<dbReference type="BindingDB" id="Q9JLS3"/>
<dbReference type="ChEMBL" id="CHEMBL4523465"/>
<dbReference type="iPTMnet" id="Q9JLS3"/>
<dbReference type="PhosphoSitePlus" id="Q9JLS3"/>
<dbReference type="PaxDb" id="10116-ENSRNOP00000061854"/>
<dbReference type="GeneID" id="64666"/>
<dbReference type="KEGG" id="rno:64666"/>
<dbReference type="UCSC" id="RGD:621590">
    <molecule id="Q9JLS3-1"/>
    <property type="organism name" value="rat"/>
</dbReference>
<dbReference type="AGR" id="RGD:621590"/>
<dbReference type="CTD" id="9344"/>
<dbReference type="RGD" id="621590">
    <property type="gene designation" value="Taok2"/>
</dbReference>
<dbReference type="eggNOG" id="KOG0577">
    <property type="taxonomic scope" value="Eukaryota"/>
</dbReference>
<dbReference type="InParanoid" id="Q9JLS3"/>
<dbReference type="PhylomeDB" id="Q9JLS3"/>
<dbReference type="EvolutionaryTrace" id="Q9JLS3"/>
<dbReference type="PRO" id="PR:Q9JLS3"/>
<dbReference type="Proteomes" id="UP000002494">
    <property type="component" value="Unplaced"/>
</dbReference>
<dbReference type="GO" id="GO:0015629">
    <property type="term" value="C:actin cytoskeleton"/>
    <property type="evidence" value="ECO:0000266"/>
    <property type="project" value="RGD"/>
</dbReference>
<dbReference type="GO" id="GO:0030424">
    <property type="term" value="C:axon"/>
    <property type="evidence" value="ECO:0000266"/>
    <property type="project" value="RGD"/>
</dbReference>
<dbReference type="GO" id="GO:0044295">
    <property type="term" value="C:axonal growth cone"/>
    <property type="evidence" value="ECO:0000266"/>
    <property type="project" value="RGD"/>
</dbReference>
<dbReference type="GO" id="GO:0005737">
    <property type="term" value="C:cytoplasm"/>
    <property type="evidence" value="ECO:0000318"/>
    <property type="project" value="GO_Central"/>
</dbReference>
<dbReference type="GO" id="GO:0031410">
    <property type="term" value="C:cytoplasmic vesicle"/>
    <property type="evidence" value="ECO:0000266"/>
    <property type="project" value="RGD"/>
</dbReference>
<dbReference type="GO" id="GO:0030659">
    <property type="term" value="C:cytoplasmic vesicle membrane"/>
    <property type="evidence" value="ECO:0007669"/>
    <property type="project" value="UniProtKB-SubCell"/>
</dbReference>
<dbReference type="GO" id="GO:0044294">
    <property type="term" value="C:dendritic growth cone"/>
    <property type="evidence" value="ECO:0000266"/>
    <property type="project" value="RGD"/>
</dbReference>
<dbReference type="GO" id="GO:0098978">
    <property type="term" value="C:glutamatergic synapse"/>
    <property type="evidence" value="ECO:0000314"/>
    <property type="project" value="SynGO"/>
</dbReference>
<dbReference type="GO" id="GO:0043005">
    <property type="term" value="C:neuron projection"/>
    <property type="evidence" value="ECO:0000266"/>
    <property type="project" value="RGD"/>
</dbReference>
<dbReference type="GO" id="GO:0098794">
    <property type="term" value="C:postsynapse"/>
    <property type="evidence" value="ECO:0000314"/>
    <property type="project" value="SynGO"/>
</dbReference>
<dbReference type="GO" id="GO:0043235">
    <property type="term" value="C:receptor complex"/>
    <property type="evidence" value="ECO:0000266"/>
    <property type="project" value="RGD"/>
</dbReference>
<dbReference type="GO" id="GO:0005524">
    <property type="term" value="F:ATP binding"/>
    <property type="evidence" value="ECO:0000314"/>
    <property type="project" value="RGD"/>
</dbReference>
<dbReference type="GO" id="GO:0004709">
    <property type="term" value="F:MAP kinase kinase kinase activity"/>
    <property type="evidence" value="ECO:0000314"/>
    <property type="project" value="RGD"/>
</dbReference>
<dbReference type="GO" id="GO:0031434">
    <property type="term" value="F:mitogen-activated protein kinase kinase binding"/>
    <property type="evidence" value="ECO:0000266"/>
    <property type="project" value="RGD"/>
</dbReference>
<dbReference type="GO" id="GO:0038191">
    <property type="term" value="F:neuropilin binding"/>
    <property type="evidence" value="ECO:0000266"/>
    <property type="project" value="RGD"/>
</dbReference>
<dbReference type="GO" id="GO:0106310">
    <property type="term" value="F:protein serine kinase activity"/>
    <property type="evidence" value="ECO:0007669"/>
    <property type="project" value="RHEA"/>
</dbReference>
<dbReference type="GO" id="GO:0004674">
    <property type="term" value="F:protein serine/threonine kinase activity"/>
    <property type="evidence" value="ECO:0000250"/>
    <property type="project" value="UniProtKB"/>
</dbReference>
<dbReference type="GO" id="GO:0030036">
    <property type="term" value="P:actin cytoskeleton organization"/>
    <property type="evidence" value="ECO:0000266"/>
    <property type="project" value="RGD"/>
</dbReference>
<dbReference type="GO" id="GO:0007409">
    <property type="term" value="P:axonogenesis"/>
    <property type="evidence" value="ECO:0000266"/>
    <property type="project" value="RGD"/>
</dbReference>
<dbReference type="GO" id="GO:0150020">
    <property type="term" value="P:basal dendrite arborization"/>
    <property type="evidence" value="ECO:0000316"/>
    <property type="project" value="ARUK-UCL"/>
</dbReference>
<dbReference type="GO" id="GO:0150019">
    <property type="term" value="P:basal dendrite morphogenesis"/>
    <property type="evidence" value="ECO:0000315"/>
    <property type="project" value="ARUK-UCL"/>
</dbReference>
<dbReference type="GO" id="GO:0006974">
    <property type="term" value="P:DNA damage response"/>
    <property type="evidence" value="ECO:0000250"/>
    <property type="project" value="UniProtKB"/>
</dbReference>
<dbReference type="GO" id="GO:0048041">
    <property type="term" value="P:focal adhesion assembly"/>
    <property type="evidence" value="ECO:0000266"/>
    <property type="project" value="RGD"/>
</dbReference>
<dbReference type="GO" id="GO:0000165">
    <property type="term" value="P:MAPK cascade"/>
    <property type="evidence" value="ECO:0000314"/>
    <property type="project" value="RGD"/>
</dbReference>
<dbReference type="GO" id="GO:0007095">
    <property type="term" value="P:mitotic G2 DNA damage checkpoint signaling"/>
    <property type="evidence" value="ECO:0000250"/>
    <property type="project" value="UniProtKB"/>
</dbReference>
<dbReference type="GO" id="GO:0048812">
    <property type="term" value="P:neuron projection morphogenesis"/>
    <property type="evidence" value="ECO:0000318"/>
    <property type="project" value="GO_Central"/>
</dbReference>
<dbReference type="GO" id="GO:0046330">
    <property type="term" value="P:positive regulation of JNK cascade"/>
    <property type="evidence" value="ECO:0000266"/>
    <property type="project" value="RGD"/>
</dbReference>
<dbReference type="GO" id="GO:0043410">
    <property type="term" value="P:positive regulation of MAPK cascade"/>
    <property type="evidence" value="ECO:0000266"/>
    <property type="project" value="RGD"/>
</dbReference>
<dbReference type="GO" id="GO:0032874">
    <property type="term" value="P:positive regulation of stress-activated MAPK cascade"/>
    <property type="evidence" value="ECO:0000250"/>
    <property type="project" value="UniProtKB"/>
</dbReference>
<dbReference type="GO" id="GO:0032956">
    <property type="term" value="P:regulation of actin cytoskeleton organization"/>
    <property type="evidence" value="ECO:0000266"/>
    <property type="project" value="RGD"/>
</dbReference>
<dbReference type="GO" id="GO:0008360">
    <property type="term" value="P:regulation of cell shape"/>
    <property type="evidence" value="ECO:0000266"/>
    <property type="project" value="RGD"/>
</dbReference>
<dbReference type="GO" id="GO:0043408">
    <property type="term" value="P:regulation of MAPK cascade"/>
    <property type="evidence" value="ECO:0000318"/>
    <property type="project" value="GO_Central"/>
</dbReference>
<dbReference type="GO" id="GO:0099175">
    <property type="term" value="P:regulation of postsynapse organization"/>
    <property type="evidence" value="ECO:0000314"/>
    <property type="project" value="SynGO"/>
</dbReference>
<dbReference type="GO" id="GO:0099179">
    <property type="term" value="P:regulation of synaptic membrane adhesion"/>
    <property type="evidence" value="ECO:0000314"/>
    <property type="project" value="SynGO"/>
</dbReference>
<dbReference type="GO" id="GO:0051403">
    <property type="term" value="P:stress-activated MAPK cascade"/>
    <property type="evidence" value="ECO:0000250"/>
    <property type="project" value="UniProtKB"/>
</dbReference>
<dbReference type="CDD" id="cd06634">
    <property type="entry name" value="STKc_TAO2"/>
    <property type="match status" value="1"/>
</dbReference>
<dbReference type="FunFam" id="1.10.510.10:FF:001615">
    <property type="entry name" value="Serine/threonine-protein kinase TAO2"/>
    <property type="match status" value="1"/>
</dbReference>
<dbReference type="FunFam" id="3.30.200.20:FF:000029">
    <property type="entry name" value="Serine/threonine-protein kinase TAO2, putative"/>
    <property type="match status" value="1"/>
</dbReference>
<dbReference type="Gene3D" id="3.30.200.20">
    <property type="entry name" value="Phosphorylase Kinase, domain 1"/>
    <property type="match status" value="1"/>
</dbReference>
<dbReference type="Gene3D" id="1.10.510.10">
    <property type="entry name" value="Transferase(Phosphotransferase) domain 1"/>
    <property type="match status" value="1"/>
</dbReference>
<dbReference type="InterPro" id="IPR011009">
    <property type="entry name" value="Kinase-like_dom_sf"/>
</dbReference>
<dbReference type="InterPro" id="IPR000719">
    <property type="entry name" value="Prot_kinase_dom"/>
</dbReference>
<dbReference type="InterPro" id="IPR017441">
    <property type="entry name" value="Protein_kinase_ATP_BS"/>
</dbReference>
<dbReference type="InterPro" id="IPR008271">
    <property type="entry name" value="Ser/Thr_kinase_AS"/>
</dbReference>
<dbReference type="InterPro" id="IPR051234">
    <property type="entry name" value="TAO_STE20_kinase"/>
</dbReference>
<dbReference type="PANTHER" id="PTHR47167">
    <property type="entry name" value="SERINE/THREONINE-PROTEIN KINASE TAO1-LIKE PROTEIN"/>
    <property type="match status" value="1"/>
</dbReference>
<dbReference type="PANTHER" id="PTHR47167:SF6">
    <property type="entry name" value="SERINE_THREONINE-PROTEIN KINASE TAO2"/>
    <property type="match status" value="1"/>
</dbReference>
<dbReference type="Pfam" id="PF00069">
    <property type="entry name" value="Pkinase"/>
    <property type="match status" value="1"/>
</dbReference>
<dbReference type="SMART" id="SM00220">
    <property type="entry name" value="S_TKc"/>
    <property type="match status" value="1"/>
</dbReference>
<dbReference type="SUPFAM" id="SSF56112">
    <property type="entry name" value="Protein kinase-like (PK-like)"/>
    <property type="match status" value="1"/>
</dbReference>
<dbReference type="PROSITE" id="PS00107">
    <property type="entry name" value="PROTEIN_KINASE_ATP"/>
    <property type="match status" value="1"/>
</dbReference>
<dbReference type="PROSITE" id="PS50011">
    <property type="entry name" value="PROTEIN_KINASE_DOM"/>
    <property type="match status" value="1"/>
</dbReference>
<dbReference type="PROSITE" id="PS00108">
    <property type="entry name" value="PROTEIN_KINASE_ST"/>
    <property type="match status" value="1"/>
</dbReference>
<name>TAOK2_RAT</name>
<sequence>MPAGGRAGSLKDPDVAELFFKDDPEKLFSDLREIGHGSFGAVYFARDVRNSEVVAIKKMSYSGKQSNEKWQDIIKEVRFLQKLRHPNTIQYRGCYLREHTAWLVMEYCLGSASDLLEVHKKPLQEVEIAAVTHGALQGLAYLHSHNMIHRDVKAGNILLSEPGLVKLGDFGSASIMAPANSFVGTPYWMAPEVILAMDEGQYDGKVDVWSLGITCIELAERKPPLFNMNAMSALYHIAQNESPALQSGHWSEYFRNFVDSCLQKIPQDRPTSEVLLKHRFVLRERPPTVIMDLIQRTKDAVRELDNLQYRKMKKILFQEAPNGPGAEAPEEEEEAEPYMHRAGTLTSLESSHSVPSMSISASSQSSSVNSLADASDNEEEEEEEEEEEEEEEEEGPESREMAMMQEGEHTVTSHSSIIHRLPGSDNLYDDPYQPEMTPGPLQPPAAPPTSTSSSSARRRAYCRNRDHFATIRTASLVSRQIQEHEQDSALREQLSGYKRMRRQHQKQLLALESRLRGEREEHSGRLQRELEAQRAGFGTEAEKLARRHQAIGEKEARAAQAEERKFQQHILGQQKKELAALLEAQKRTYKLRKEQLKEELQENPSTPKREKAEWLLRQKEQLQQCQAEEEAGLLRRQRQYFELQCRQYKRKMLLARHSLDQDLLREDLNKKQTQKDLECALLLRQHEATRELELRQLQAVQRTRAELTRLQHQTELGNQLEYNKRREQELRQKHAAQVRQQPKSLKVRAGQLPMGLPATGALGPLSTGTLSEEQPCSSGQEAILGQRMLGEEEEAVPERMILGKEGTTLEPEEQRILGEEMGTFSSSPQKHRSLVNEEDWDISKEMKESRVPSLASQERNIIGQEEAGAWNLWEKEHGNLVDMEFKLGWVQGPVLTPVPEEEEEEEEEGGAPIGTPRDPGDGCPSPDIPPEPPPSHLRQYPASQLPGFLSHGLLTGLSFAVGSSSGLLPLLLLLLLPLLAAQGGGGLQAALLALEVGLVGLGASYLFLCTALHLPPSLFLLLAQGTALGAVLSLSWRRGLMGVPLGLGAAWLLAWPSLALPLAAMAAGGKWVRQQGPQMRRGISRLWLRVLLRLSPMVFRALQGCAAVGDRGLFALYPKTNKNGFRSRLPVPWPRQGNPRTTQHPLALLARVWALCKGWNWRLARASHRLASCLPPWAVHILASWGLLKGERPSRIPRLLPRSQRRLGLSASRQLPPGTVAGRRSQTRRALPPWR</sequence>
<reference key="1">
    <citation type="journal article" date="1999" name="J. Biol. Chem.">
        <title>Isolation of the protein kinase TAO2 and identification of its mitogen-activated protein kinase/extracellular signal-regulated kinase kinase binding domain.</title>
        <authorList>
            <person name="Chen Z."/>
            <person name="Hutchison M."/>
            <person name="Cobb M.H."/>
        </authorList>
    </citation>
    <scope>NUCLEOTIDE SEQUENCE [MRNA] (ISOFORM 1)</scope>
    <scope>FUNCTION</scope>
    <scope>INTERACTION WITH MAP2K3 AND MAP2K6</scope>
    <source>
        <tissue>Brain</tissue>
    </source>
</reference>
<reference key="2">
    <citation type="journal article" date="2007" name="Neuron">
        <title>Activity-induced protocadherin arcadlin regulates dendritic spine number by triggering N-cadherin endocytosis via TAO2beta and p38 MAP kinases.</title>
        <authorList>
            <person name="Yasuda S."/>
            <person name="Tanaka H."/>
            <person name="Sugiura H."/>
            <person name="Okamura K."/>
            <person name="Sakaguchi T."/>
            <person name="Tran U."/>
            <person name="Takemiya T."/>
            <person name="Mizoguchi A."/>
            <person name="Yagita Y."/>
            <person name="Sakurai T."/>
            <person name="De Robertis E.M."/>
            <person name="Yamagata K."/>
        </authorList>
    </citation>
    <scope>NUCLEOTIDE SEQUENCE [MRNA] (ISOFORM 2)</scope>
    <scope>FUNCTION</scope>
    <scope>INTERACTION WITH PCDH8</scope>
    <scope>SUBCELLULAR LOCATION</scope>
    <scope>MUTAGENESIS OF LYS-57</scope>
    <scope>PHOSPHORYLATION AT SER-1038 (ISOFORM 2)</scope>
</reference>
<reference evidence="14 15" key="3">
    <citation type="journal article" date="2004" name="Structure">
        <title>Crystal structure of the TAO2 kinase domain: activation and specificity of a Ste20p MAP3K.</title>
        <authorList>
            <person name="Zhou T."/>
            <person name="Raman M."/>
            <person name="Gao Y."/>
            <person name="Earnest S."/>
            <person name="Chen Z."/>
            <person name="Machius M."/>
            <person name="Cobb M.H."/>
            <person name="Goldsmith E.J."/>
        </authorList>
    </citation>
    <scope>X-RAY CRYSTALLOGRAPHY (2.1 ANGSTROMS) OF 1-320</scope>
    <scope>PHOSPHORYLATION AT SER-181</scope>
</reference>
<reference evidence="16" key="4">
    <citation type="journal article" date="2006" name="Acta Biochim. Biophys. Sin.">
        <title>Crystal structure of the MAP3K TAO2 kinase domain bound by an inhibitor staurosporine.</title>
        <authorList>
            <person name="Zhou T.J."/>
            <person name="Sun L.G."/>
            <person name="Gao Y."/>
            <person name="Goldsmith E.J."/>
        </authorList>
    </citation>
    <scope>X-RAY CRYSTALLOGRAPHY (2.1 ANGSTROMS) OF 1-320 IN COMPLEX WITH STAUROSPORINE</scope>
    <scope>ACTIVITY REGULATION</scope>
</reference>
<gene>
    <name type="primary">Taok2</name>
    <name type="synonym">Tao2</name>
</gene>
<accession>Q9JLS3</accession>
<accession>A6BM05</accession>
<comment type="function">
    <text evidence="8 11">Serine/threonine-protein kinase involved in different processes such as membrane blebbing and apoptotic bodies formation DNA damage response and MAPK14/p38 MAPK stress-activated MAPK cascade. Phosphorylates itself, MBP, activated MAPK8, MAP2K3, MAP2K6 and tubulins. Activates the MAPK14/p38 MAPK signaling pathway through the specific activation and phosphorylation of the upstream MAP2K3 and MAP2K6 kinases. In response to DNA damage, involved in the G2/M transition DNA damage checkpoint by activating the p38/MAPK14 stress-activated MAPK cascade, probably by mediating phosphorylation of upstream MAP2K3 and MAP2K6 kinases. May affect microtubule organization and stability. May play a role in the osmotic stress-MAPK8 pathway. Prevents MAP3K7-mediated activation of CHUK, and thus NF-kappa-B activation. Isoform 2, but not isoform 1, is required for PCDH8 endocytosis. Following homophilic interactions between PCDH8 extracellular domains, isoform 2 phosphorylates and activates MAPK14/p38 MAPK which in turn phosphorylates isoform 2. This process leads to PCDH8 endocytosis and CDH2 cointernalization. Both isoforms are involved in MAPK14/p38 MAPK activation.</text>
</comment>
<comment type="catalytic activity">
    <reaction>
        <text>L-seryl-[protein] + ATP = O-phospho-L-seryl-[protein] + ADP + H(+)</text>
        <dbReference type="Rhea" id="RHEA:17989"/>
        <dbReference type="Rhea" id="RHEA-COMP:9863"/>
        <dbReference type="Rhea" id="RHEA-COMP:11604"/>
        <dbReference type="ChEBI" id="CHEBI:15378"/>
        <dbReference type="ChEBI" id="CHEBI:29999"/>
        <dbReference type="ChEBI" id="CHEBI:30616"/>
        <dbReference type="ChEBI" id="CHEBI:83421"/>
        <dbReference type="ChEBI" id="CHEBI:456216"/>
        <dbReference type="EC" id="2.7.11.1"/>
    </reaction>
</comment>
<comment type="catalytic activity">
    <reaction>
        <text>L-threonyl-[protein] + ATP = O-phospho-L-threonyl-[protein] + ADP + H(+)</text>
        <dbReference type="Rhea" id="RHEA:46608"/>
        <dbReference type="Rhea" id="RHEA-COMP:11060"/>
        <dbReference type="Rhea" id="RHEA-COMP:11605"/>
        <dbReference type="ChEBI" id="CHEBI:15378"/>
        <dbReference type="ChEBI" id="CHEBI:30013"/>
        <dbReference type="ChEBI" id="CHEBI:30616"/>
        <dbReference type="ChEBI" id="CHEBI:61977"/>
        <dbReference type="ChEBI" id="CHEBI:456216"/>
        <dbReference type="EC" id="2.7.11.1"/>
    </reaction>
</comment>
<comment type="cofactor">
    <cofactor>
        <name>Mg(2+)</name>
        <dbReference type="ChEBI" id="CHEBI:18420"/>
    </cofactor>
</comment>
<comment type="activity regulation">
    <text evidence="10">Moderately inhibited by staurosporine, a broad-range protein kinase inhibitor.</text>
</comment>
<comment type="subunit">
    <text evidence="1 8 10 11">Self-associates. Interacts with MAP2K3 and MAP2K6. Interacts with tubulins. Interacts with MAP3K7 and interferes with MAP3K7-binding to CHUK and thus prevents NF-kappa-B activation (By similarity). Isoform 2 interacts with PCDH8; this complex may also include CDH2.</text>
</comment>
<comment type="subcellular location">
    <subcellularLocation>
        <location evidence="1">Cytoplasmic vesicle membrane</location>
        <topology evidence="1">Multi-pass membrane protein</topology>
    </subcellularLocation>
    <subcellularLocation>
        <location evidence="1">Cytoplasm</location>
        <location evidence="1">Cytoskeleton</location>
    </subcellularLocation>
    <text evidence="1">Found to be perinuclear and localized to vesicular compartment.</text>
</comment>
<comment type="subcellular location">
    <molecule>Isoform 2</molecule>
    <subcellularLocation>
        <location>Cell projection</location>
        <location>Dendrite</location>
    </subcellularLocation>
    <text>In dendrites, colocalizes with PCDH8.</text>
</comment>
<comment type="alternative products">
    <event type="alternative splicing"/>
    <isoform>
        <id>Q9JLS3-1</id>
        <name>1</name>
        <name>TAO2-alpha</name>
        <sequence type="displayed"/>
    </isoform>
    <isoform>
        <id>Q9JLS3-2</id>
        <name>2</name>
        <name>TAO2-beta</name>
        <sequence type="described" ref="VSP_040545 VSP_040546 VSP_040547"/>
    </isoform>
</comment>
<comment type="PTM">
    <text evidence="1">Autophosphorylated. Phosphorylated by ATM (By similarity).</text>
</comment>
<comment type="PTM">
    <molecule>Isoform 2</molecule>
    <text evidence="9">Phosphorylated on Ser-1038 by MAPK14. This phosphorylation is required PCDH8 for endocytosis.</text>
</comment>
<comment type="similarity">
    <text evidence="13">Belongs to the protein kinase superfamily. STE Ser/Thr protein kinase family. STE20 subfamily.</text>
</comment>
<evidence type="ECO:0000250" key="1"/>
<evidence type="ECO:0000250" key="2">
    <source>
        <dbReference type="UniProtKB" id="Q6ZQ29"/>
    </source>
</evidence>
<evidence type="ECO:0000250" key="3">
    <source>
        <dbReference type="UniProtKB" id="Q9UL54"/>
    </source>
</evidence>
<evidence type="ECO:0000255" key="4"/>
<evidence type="ECO:0000255" key="5">
    <source>
        <dbReference type="PROSITE-ProRule" id="PRU00159"/>
    </source>
</evidence>
<evidence type="ECO:0000255" key="6">
    <source>
        <dbReference type="PROSITE-ProRule" id="PRU10027"/>
    </source>
</evidence>
<evidence type="ECO:0000256" key="7">
    <source>
        <dbReference type="SAM" id="MobiDB-lite"/>
    </source>
</evidence>
<evidence type="ECO:0000269" key="8">
    <source>
    </source>
</evidence>
<evidence type="ECO:0000269" key="9">
    <source>
    </source>
</evidence>
<evidence type="ECO:0000269" key="10">
    <source>
    </source>
</evidence>
<evidence type="ECO:0000269" key="11">
    <source>
    </source>
</evidence>
<evidence type="ECO:0000303" key="12">
    <source>
    </source>
</evidence>
<evidence type="ECO:0000305" key="13"/>
<evidence type="ECO:0007744" key="14">
    <source>
        <dbReference type="PDB" id="1U5Q"/>
    </source>
</evidence>
<evidence type="ECO:0007744" key="15">
    <source>
        <dbReference type="PDB" id="1U5R"/>
    </source>
</evidence>
<evidence type="ECO:0007744" key="16">
    <source>
        <dbReference type="PDB" id="2GCD"/>
    </source>
</evidence>
<evidence type="ECO:0007829" key="17">
    <source>
        <dbReference type="PDB" id="1U5Q"/>
    </source>
</evidence>
<evidence type="ECO:0007829" key="18">
    <source>
        <dbReference type="PDB" id="2GCD"/>
    </source>
</evidence>
<protein>
    <recommendedName>
        <fullName>Serine/threonine-protein kinase TAO2</fullName>
        <ecNumber>2.7.11.1</ecNumber>
    </recommendedName>
    <alternativeName>
        <fullName>Thousand and one amino acid protein 2</fullName>
    </alternativeName>
</protein>